<protein>
    <recommendedName>
        <fullName evidence="1">DNA-directed RNA polymerase subunit Rpo3</fullName>
        <ecNumber evidence="1">2.7.7.6</ecNumber>
    </recommendedName>
    <alternativeName>
        <fullName evidence="1">DNA-directed RNA polymerase subunit D</fullName>
    </alternativeName>
</protein>
<reference key="1">
    <citation type="submission" date="2006-12" db="EMBL/GenBank/DDBJ databases">
        <title>Complete sequence of Pyrobaculum islandicum DSM 4184.</title>
        <authorList>
            <person name="Copeland A."/>
            <person name="Lucas S."/>
            <person name="Lapidus A."/>
            <person name="Barry K."/>
            <person name="Detter J.C."/>
            <person name="Glavina del Rio T."/>
            <person name="Dalin E."/>
            <person name="Tice H."/>
            <person name="Pitluck S."/>
            <person name="Meincke L."/>
            <person name="Brettin T."/>
            <person name="Bruce D."/>
            <person name="Han C."/>
            <person name="Tapia R."/>
            <person name="Gilna P."/>
            <person name="Schmutz J."/>
            <person name="Larimer F."/>
            <person name="Land M."/>
            <person name="Hauser L."/>
            <person name="Kyrpides N."/>
            <person name="Mikhailova N."/>
            <person name="Cozen A.E."/>
            <person name="Fitz-Gibbon S.T."/>
            <person name="House C.H."/>
            <person name="Saltikov C."/>
            <person name="Lowe T."/>
            <person name="Richardson P."/>
        </authorList>
    </citation>
    <scope>NUCLEOTIDE SEQUENCE [LARGE SCALE GENOMIC DNA]</scope>
    <source>
        <strain>DSM 4184 / JCM 9189 / GEO3</strain>
    </source>
</reference>
<feature type="chain" id="PRO_1000005792" description="DNA-directed RNA polymerase subunit Rpo3">
    <location>
        <begin position="1"/>
        <end position="262"/>
    </location>
</feature>
<keyword id="KW-0963">Cytoplasm</keyword>
<keyword id="KW-0240">DNA-directed RNA polymerase</keyword>
<keyword id="KW-0548">Nucleotidyltransferase</keyword>
<keyword id="KW-0804">Transcription</keyword>
<keyword id="KW-0808">Transferase</keyword>
<dbReference type="EC" id="2.7.7.6" evidence="1"/>
<dbReference type="EMBL" id="CP000504">
    <property type="protein sequence ID" value="ABL87875.1"/>
    <property type="molecule type" value="Genomic_DNA"/>
</dbReference>
<dbReference type="RefSeq" id="WP_011762451.1">
    <property type="nucleotide sequence ID" value="NC_008701.1"/>
</dbReference>
<dbReference type="SMR" id="A1RSE3"/>
<dbReference type="STRING" id="384616.Pisl_0697"/>
<dbReference type="GeneID" id="4616570"/>
<dbReference type="KEGG" id="pis:Pisl_0697"/>
<dbReference type="eggNOG" id="arCOG04241">
    <property type="taxonomic scope" value="Archaea"/>
</dbReference>
<dbReference type="HOGENOM" id="CLU_038421_3_1_2"/>
<dbReference type="OrthoDB" id="84933at2157"/>
<dbReference type="Proteomes" id="UP000002595">
    <property type="component" value="Chromosome"/>
</dbReference>
<dbReference type="GO" id="GO:0005737">
    <property type="term" value="C:cytoplasm"/>
    <property type="evidence" value="ECO:0007669"/>
    <property type="project" value="UniProtKB-SubCell"/>
</dbReference>
<dbReference type="GO" id="GO:0000428">
    <property type="term" value="C:DNA-directed RNA polymerase complex"/>
    <property type="evidence" value="ECO:0007669"/>
    <property type="project" value="UniProtKB-KW"/>
</dbReference>
<dbReference type="GO" id="GO:0003677">
    <property type="term" value="F:DNA binding"/>
    <property type="evidence" value="ECO:0007669"/>
    <property type="project" value="UniProtKB-UniRule"/>
</dbReference>
<dbReference type="GO" id="GO:0003899">
    <property type="term" value="F:DNA-directed RNA polymerase activity"/>
    <property type="evidence" value="ECO:0007669"/>
    <property type="project" value="UniProtKB-UniRule"/>
</dbReference>
<dbReference type="GO" id="GO:0046983">
    <property type="term" value="F:protein dimerization activity"/>
    <property type="evidence" value="ECO:0007669"/>
    <property type="project" value="InterPro"/>
</dbReference>
<dbReference type="GO" id="GO:0006351">
    <property type="term" value="P:DNA-templated transcription"/>
    <property type="evidence" value="ECO:0007669"/>
    <property type="project" value="UniProtKB-UniRule"/>
</dbReference>
<dbReference type="CDD" id="cd07030">
    <property type="entry name" value="RNAP_D"/>
    <property type="match status" value="1"/>
</dbReference>
<dbReference type="Gene3D" id="3.30.70.3110">
    <property type="match status" value="1"/>
</dbReference>
<dbReference type="Gene3D" id="2.170.120.12">
    <property type="entry name" value="DNA-directed RNA polymerase, insert domain"/>
    <property type="match status" value="1"/>
</dbReference>
<dbReference type="Gene3D" id="3.30.1360.10">
    <property type="entry name" value="RNA polymerase, RBP11-like subunit"/>
    <property type="match status" value="1"/>
</dbReference>
<dbReference type="HAMAP" id="MF_00320">
    <property type="entry name" value="RNApol_arch_Rpo3"/>
    <property type="match status" value="1"/>
</dbReference>
<dbReference type="InterPro" id="IPR001514">
    <property type="entry name" value="DNA-dir_RNA_pol_30-40kDasu_CS"/>
</dbReference>
<dbReference type="InterPro" id="IPR011262">
    <property type="entry name" value="DNA-dir_RNA_pol_insert"/>
</dbReference>
<dbReference type="InterPro" id="IPR011263">
    <property type="entry name" value="DNA-dir_RNA_pol_RpoA/D/Rpb3"/>
</dbReference>
<dbReference type="InterPro" id="IPR036603">
    <property type="entry name" value="RBP11-like"/>
</dbReference>
<dbReference type="InterPro" id="IPR022842">
    <property type="entry name" value="RNAP_Rpo3/Rpb3/RPAC1"/>
</dbReference>
<dbReference type="InterPro" id="IPR036643">
    <property type="entry name" value="RNApol_insert_sf"/>
</dbReference>
<dbReference type="InterPro" id="IPR050518">
    <property type="entry name" value="Rpo3/RPB3_RNA_Pol_subunit"/>
</dbReference>
<dbReference type="NCBIfam" id="NF001988">
    <property type="entry name" value="PRK00783.1"/>
    <property type="match status" value="1"/>
</dbReference>
<dbReference type="PANTHER" id="PTHR11800">
    <property type="entry name" value="DNA-DIRECTED RNA POLYMERASE"/>
    <property type="match status" value="1"/>
</dbReference>
<dbReference type="PANTHER" id="PTHR11800:SF2">
    <property type="entry name" value="DNA-DIRECTED RNA POLYMERASE II SUBUNIT RPB3"/>
    <property type="match status" value="1"/>
</dbReference>
<dbReference type="Pfam" id="PF01000">
    <property type="entry name" value="RNA_pol_A_bac"/>
    <property type="match status" value="1"/>
</dbReference>
<dbReference type="Pfam" id="PF01193">
    <property type="entry name" value="RNA_pol_L"/>
    <property type="match status" value="1"/>
</dbReference>
<dbReference type="SMART" id="SM00662">
    <property type="entry name" value="RPOLD"/>
    <property type="match status" value="1"/>
</dbReference>
<dbReference type="SUPFAM" id="SSF56553">
    <property type="entry name" value="Insert subdomain of RNA polymerase alpha subunit"/>
    <property type="match status" value="1"/>
</dbReference>
<dbReference type="SUPFAM" id="SSF55257">
    <property type="entry name" value="RBP11-like subunits of RNA polymerase"/>
    <property type="match status" value="1"/>
</dbReference>
<dbReference type="PROSITE" id="PS00446">
    <property type="entry name" value="RNA_POL_D_30KD"/>
    <property type="match status" value="1"/>
</dbReference>
<name>RPO3_PYRIL</name>
<evidence type="ECO:0000255" key="1">
    <source>
        <dbReference type="HAMAP-Rule" id="MF_00320"/>
    </source>
</evidence>
<gene>
    <name evidence="1" type="primary">rpo3</name>
    <name evidence="1" type="synonym">rpoD</name>
    <name type="ordered locus">Pisl_0697</name>
</gene>
<organism>
    <name type="scientific">Pyrobaculum islandicum (strain DSM 4184 / JCM 9189 / GEO3)</name>
    <dbReference type="NCBI Taxonomy" id="384616"/>
    <lineage>
        <taxon>Archaea</taxon>
        <taxon>Thermoproteota</taxon>
        <taxon>Thermoprotei</taxon>
        <taxon>Thermoproteales</taxon>
        <taxon>Thermoproteaceae</taxon>
        <taxon>Pyrobaculum</taxon>
    </lineage>
</organism>
<accession>A1RSE3</accession>
<sequence>MPKATIVEKTPLFLKAVIEGAYPSLVNSIRRVIISELPVMAIDYVVIVSNTSVMYDEMLAHRLGLVPLTTPLQALPPIEDCETGLVDPSECTVRLMLQINAESDKIVYSGDLVSERPDVVPVYKDIPIVKLVKGQSIILEAYAKLGRAKEHAKWQAALASYYYYPRIKVLDEKCKEECKDICKELTNPFECTFNKAWTCRDICGDRLIVEWDRYKYVFWVESFGNYDVETALREAFRILKKKFSDFITTLTQKAGSLVETKV</sequence>
<comment type="function">
    <text evidence="1">DNA-dependent RNA polymerase (RNAP) catalyzes the transcription of DNA into RNA using the four ribonucleoside triphosphates as substrates.</text>
</comment>
<comment type="catalytic activity">
    <reaction evidence="1">
        <text>RNA(n) + a ribonucleoside 5'-triphosphate = RNA(n+1) + diphosphate</text>
        <dbReference type="Rhea" id="RHEA:21248"/>
        <dbReference type="Rhea" id="RHEA-COMP:14527"/>
        <dbReference type="Rhea" id="RHEA-COMP:17342"/>
        <dbReference type="ChEBI" id="CHEBI:33019"/>
        <dbReference type="ChEBI" id="CHEBI:61557"/>
        <dbReference type="ChEBI" id="CHEBI:140395"/>
        <dbReference type="EC" id="2.7.7.6"/>
    </reaction>
</comment>
<comment type="subunit">
    <text evidence="1">Part of the RNA polymerase complex.</text>
</comment>
<comment type="subcellular location">
    <subcellularLocation>
        <location evidence="1">Cytoplasm</location>
    </subcellularLocation>
</comment>
<comment type="similarity">
    <text evidence="1">Belongs to the archaeal Rpo3/eukaryotic RPB3 RNA polymerase subunit family.</text>
</comment>
<proteinExistence type="inferred from homology"/>